<gene>
    <name evidence="1" type="primary">rlmL</name>
    <name type="ordered locus">Ecok1_08640</name>
    <name type="ORF">APECO1_53</name>
</gene>
<feature type="chain" id="PRO_0000366746" description="Ribosomal RNA large subunit methyltransferase K/L">
    <location>
        <begin position="1"/>
        <end position="702"/>
    </location>
</feature>
<feature type="domain" description="THUMP" evidence="1">
    <location>
        <begin position="43"/>
        <end position="154"/>
    </location>
</feature>
<evidence type="ECO:0000255" key="1">
    <source>
        <dbReference type="HAMAP-Rule" id="MF_01858"/>
    </source>
</evidence>
<comment type="function">
    <text evidence="1">Specifically methylates the guanine in position 2445 (m2G2445) and the guanine in position 2069 (m7G2069) of 23S rRNA.</text>
</comment>
<comment type="catalytic activity">
    <reaction evidence="1">
        <text>guanosine(2445) in 23S rRNA + S-adenosyl-L-methionine = N(2)-methylguanosine(2445) in 23S rRNA + S-adenosyl-L-homocysteine + H(+)</text>
        <dbReference type="Rhea" id="RHEA:42740"/>
        <dbReference type="Rhea" id="RHEA-COMP:10215"/>
        <dbReference type="Rhea" id="RHEA-COMP:10216"/>
        <dbReference type="ChEBI" id="CHEBI:15378"/>
        <dbReference type="ChEBI" id="CHEBI:57856"/>
        <dbReference type="ChEBI" id="CHEBI:59789"/>
        <dbReference type="ChEBI" id="CHEBI:74269"/>
        <dbReference type="ChEBI" id="CHEBI:74481"/>
        <dbReference type="EC" id="2.1.1.173"/>
    </reaction>
</comment>
<comment type="catalytic activity">
    <reaction evidence="1">
        <text>guanosine(2069) in 23S rRNA + S-adenosyl-L-methionine = N(2)-methylguanosine(2069) in 23S rRNA + S-adenosyl-L-homocysteine + H(+)</text>
        <dbReference type="Rhea" id="RHEA:43772"/>
        <dbReference type="Rhea" id="RHEA-COMP:10688"/>
        <dbReference type="Rhea" id="RHEA-COMP:10689"/>
        <dbReference type="ChEBI" id="CHEBI:15378"/>
        <dbReference type="ChEBI" id="CHEBI:57856"/>
        <dbReference type="ChEBI" id="CHEBI:59789"/>
        <dbReference type="ChEBI" id="CHEBI:74269"/>
        <dbReference type="ChEBI" id="CHEBI:74481"/>
        <dbReference type="EC" id="2.1.1.264"/>
    </reaction>
</comment>
<comment type="subcellular location">
    <subcellularLocation>
        <location evidence="1">Cytoplasm</location>
    </subcellularLocation>
</comment>
<comment type="similarity">
    <text evidence="1">Belongs to the methyltransferase superfamily. RlmKL family.</text>
</comment>
<sequence length="702" mass="78812">MNSLFASTARGLEELLKTELENLGAVECQVVQGGVHFKGDTRLVYQSLMWSRLASRIMLPLGECKVYSDLDLYLGVQAINWTEMFNPGATFAVHFSGLNDTIRNSQYGAMKVKDAIVDAFTRKNLPRPNVDRDAPDIRVNVWLHKETASIALDLSGDGLHLRGYRDRAGMAPIKETLAAAIVMRSGWQPGTPLLDPMCGSGTLLIEAAMLATDRAPGLHRGRWGFSGWTQHDEAIWQEVKAEAQTRARKGLAEYSSHFFGSDSDARVIQRARTNARLAGIGELITFEVNDVAQLANPLPKGPYGTVLSNPPYGERLDSEPALIALHSLLGRIMKNQFGGWNLSLFSASPDLLSCLQLRADKQYKAKNGPLDCVQKNYHVAESTPDSKPVMAAEDYANRLRKNLKKFEKWARQEGIECYRLYDADLPEYNVAVDRYADWVVVQEYAPPKTIDAHKARQRLFDIIAATISVLGIAPNKLVLKTRERQKGKNQYQKLGEKGEFLEVTEYNAHLWVNLTDYLDTGLFLDHRIARRMLGQMSKGKDFLNLFSYTGSATVHAGLGGARSTTTVDMSRTYLEWAERNLRLNGLTGRAHRLIQADCLAWLREANEQFDLIFIDPPTFSNSKRMEDAFDVQRDHLALMKDLKRLLRAGGTIMFSNNKRGFRMDLDGLAKLGLKAQEITQKTLSQDFARNRQIHNCWLITAA</sequence>
<accession>A1A9L8</accession>
<name>RLMKL_ECOK1</name>
<keyword id="KW-0963">Cytoplasm</keyword>
<keyword id="KW-0489">Methyltransferase</keyword>
<keyword id="KW-1185">Reference proteome</keyword>
<keyword id="KW-0694">RNA-binding</keyword>
<keyword id="KW-0698">rRNA processing</keyword>
<keyword id="KW-0949">S-adenosyl-L-methionine</keyword>
<keyword id="KW-0808">Transferase</keyword>
<protein>
    <recommendedName>
        <fullName evidence="1">Ribosomal RNA large subunit methyltransferase K/L</fullName>
    </recommendedName>
    <domain>
        <recommendedName>
            <fullName evidence="1">23S rRNA m2G2445 methyltransferase</fullName>
            <ecNumber evidence="1">2.1.1.173</ecNumber>
        </recommendedName>
        <alternativeName>
            <fullName evidence="1">rRNA (guanine-N(2)-)-methyltransferase RlmL</fullName>
        </alternativeName>
    </domain>
    <domain>
        <recommendedName>
            <fullName evidence="1">23S rRNA m7G2069 methyltransferase</fullName>
            <ecNumber evidence="1">2.1.1.264</ecNumber>
        </recommendedName>
        <alternativeName>
            <fullName evidence="1">rRNA (guanine-N(7)-)-methyltransferase RlmK</fullName>
        </alternativeName>
    </domain>
</protein>
<dbReference type="EC" id="2.1.1.173" evidence="1"/>
<dbReference type="EC" id="2.1.1.264" evidence="1"/>
<dbReference type="EMBL" id="CP000468">
    <property type="protein sequence ID" value="ABJ00358.1"/>
    <property type="molecule type" value="Genomic_DNA"/>
</dbReference>
<dbReference type="SMR" id="A1A9L8"/>
<dbReference type="KEGG" id="ecv:APECO1_53"/>
<dbReference type="HOGENOM" id="CLU_014042_2_0_6"/>
<dbReference type="Proteomes" id="UP000008216">
    <property type="component" value="Chromosome"/>
</dbReference>
<dbReference type="GO" id="GO:0005737">
    <property type="term" value="C:cytoplasm"/>
    <property type="evidence" value="ECO:0007669"/>
    <property type="project" value="UniProtKB-SubCell"/>
</dbReference>
<dbReference type="GO" id="GO:0052915">
    <property type="term" value="F:23S rRNA (guanine(2445)-N(2))-methyltransferase activity"/>
    <property type="evidence" value="ECO:0007669"/>
    <property type="project" value="UniProtKB-UniRule"/>
</dbReference>
<dbReference type="GO" id="GO:0003723">
    <property type="term" value="F:RNA binding"/>
    <property type="evidence" value="ECO:0007669"/>
    <property type="project" value="UniProtKB-KW"/>
</dbReference>
<dbReference type="GO" id="GO:0070043">
    <property type="term" value="F:rRNA (guanine-N7-)-methyltransferase activity"/>
    <property type="evidence" value="ECO:0007669"/>
    <property type="project" value="UniProtKB-UniRule"/>
</dbReference>
<dbReference type="CDD" id="cd02440">
    <property type="entry name" value="AdoMet_MTases"/>
    <property type="match status" value="1"/>
</dbReference>
<dbReference type="CDD" id="cd11715">
    <property type="entry name" value="THUMP_AdoMetMT"/>
    <property type="match status" value="1"/>
</dbReference>
<dbReference type="FunFam" id="3.30.750.80:FF:000001">
    <property type="entry name" value="Ribosomal RNA large subunit methyltransferase K/L"/>
    <property type="match status" value="1"/>
</dbReference>
<dbReference type="FunFam" id="3.40.50.150:FF:000039">
    <property type="entry name" value="Ribosomal RNA large subunit methyltransferase K/L"/>
    <property type="match status" value="1"/>
</dbReference>
<dbReference type="Gene3D" id="3.30.2130.30">
    <property type="match status" value="1"/>
</dbReference>
<dbReference type="Gene3D" id="3.30.750.80">
    <property type="entry name" value="RNA methyltransferase domain (HRMD) like"/>
    <property type="match status" value="1"/>
</dbReference>
<dbReference type="Gene3D" id="3.40.50.150">
    <property type="entry name" value="Vaccinia Virus protein VP39"/>
    <property type="match status" value="2"/>
</dbReference>
<dbReference type="HAMAP" id="MF_01858">
    <property type="entry name" value="23SrRNA_methyltr_KL"/>
    <property type="match status" value="1"/>
</dbReference>
<dbReference type="InterPro" id="IPR017244">
    <property type="entry name" value="23SrRNA_methyltr_KL"/>
</dbReference>
<dbReference type="InterPro" id="IPR002052">
    <property type="entry name" value="DNA_methylase_N6_adenine_CS"/>
</dbReference>
<dbReference type="InterPro" id="IPR000241">
    <property type="entry name" value="RlmKL-like_Mtase"/>
</dbReference>
<dbReference type="InterPro" id="IPR053943">
    <property type="entry name" value="RlmKL-like_Mtase_CS"/>
</dbReference>
<dbReference type="InterPro" id="IPR054170">
    <property type="entry name" value="RlmL_1st"/>
</dbReference>
<dbReference type="InterPro" id="IPR019614">
    <property type="entry name" value="SAM-dep_methyl-trfase"/>
</dbReference>
<dbReference type="InterPro" id="IPR029063">
    <property type="entry name" value="SAM-dependent_MTases_sf"/>
</dbReference>
<dbReference type="InterPro" id="IPR004114">
    <property type="entry name" value="THUMP_dom"/>
</dbReference>
<dbReference type="NCBIfam" id="NF008748">
    <property type="entry name" value="PRK11783.1"/>
    <property type="match status" value="1"/>
</dbReference>
<dbReference type="PANTHER" id="PTHR47313">
    <property type="entry name" value="RIBOSOMAL RNA LARGE SUBUNIT METHYLTRANSFERASE K/L"/>
    <property type="match status" value="1"/>
</dbReference>
<dbReference type="PANTHER" id="PTHR47313:SF1">
    <property type="entry name" value="RIBOSOMAL RNA LARGE SUBUNIT METHYLTRANSFERASE K_L"/>
    <property type="match status" value="1"/>
</dbReference>
<dbReference type="Pfam" id="PF10672">
    <property type="entry name" value="Methyltrans_SAM"/>
    <property type="match status" value="1"/>
</dbReference>
<dbReference type="Pfam" id="PF22020">
    <property type="entry name" value="RlmL_1st"/>
    <property type="match status" value="1"/>
</dbReference>
<dbReference type="Pfam" id="PF02926">
    <property type="entry name" value="THUMP"/>
    <property type="match status" value="1"/>
</dbReference>
<dbReference type="Pfam" id="PF01170">
    <property type="entry name" value="UPF0020"/>
    <property type="match status" value="1"/>
</dbReference>
<dbReference type="PIRSF" id="PIRSF037618">
    <property type="entry name" value="RNA_Mtase_bacteria_prd"/>
    <property type="match status" value="1"/>
</dbReference>
<dbReference type="PRINTS" id="PR00507">
    <property type="entry name" value="N12N6MTFRASE"/>
</dbReference>
<dbReference type="SMART" id="SM00981">
    <property type="entry name" value="THUMP"/>
    <property type="match status" value="1"/>
</dbReference>
<dbReference type="SUPFAM" id="SSF53335">
    <property type="entry name" value="S-adenosyl-L-methionine-dependent methyltransferases"/>
    <property type="match status" value="2"/>
</dbReference>
<dbReference type="PROSITE" id="PS51165">
    <property type="entry name" value="THUMP"/>
    <property type="match status" value="1"/>
</dbReference>
<dbReference type="PROSITE" id="PS01261">
    <property type="entry name" value="UPF0020"/>
    <property type="match status" value="1"/>
</dbReference>
<proteinExistence type="inferred from homology"/>
<organism>
    <name type="scientific">Escherichia coli O1:K1 / APEC</name>
    <dbReference type="NCBI Taxonomy" id="405955"/>
    <lineage>
        <taxon>Bacteria</taxon>
        <taxon>Pseudomonadati</taxon>
        <taxon>Pseudomonadota</taxon>
        <taxon>Gammaproteobacteria</taxon>
        <taxon>Enterobacterales</taxon>
        <taxon>Enterobacteriaceae</taxon>
        <taxon>Escherichia</taxon>
    </lineage>
</organism>
<reference key="1">
    <citation type="journal article" date="2007" name="J. Bacteriol.">
        <title>The genome sequence of avian pathogenic Escherichia coli strain O1:K1:H7 shares strong similarities with human extraintestinal pathogenic E. coli genomes.</title>
        <authorList>
            <person name="Johnson T.J."/>
            <person name="Kariyawasam S."/>
            <person name="Wannemuehler Y."/>
            <person name="Mangiamele P."/>
            <person name="Johnson S.J."/>
            <person name="Doetkott C."/>
            <person name="Skyberg J.A."/>
            <person name="Lynne A.M."/>
            <person name="Johnson J.R."/>
            <person name="Nolan L.K."/>
        </authorList>
    </citation>
    <scope>NUCLEOTIDE SEQUENCE [LARGE SCALE GENOMIC DNA]</scope>
</reference>